<feature type="signal peptide" evidence="3">
    <location>
        <begin position="1"/>
        <end position="8"/>
    </location>
</feature>
<feature type="chain" id="PRO_0000021014" description="Curli assembly protein CsgC">
    <location>
        <begin position="9"/>
        <end position="108"/>
    </location>
</feature>
<keyword id="KW-0143">Chaperone</keyword>
<keyword id="KW-0903">Direct protein sequencing</keyword>
<keyword id="KW-0574">Periplasm</keyword>
<keyword id="KW-0732">Signal</keyword>
<name>CSGC_SALEN</name>
<protein>
    <recommendedName>
        <fullName>Curli assembly protein CsgC</fullName>
    </recommendedName>
</protein>
<proteinExistence type="evidence at protein level"/>
<accession>P0A1Z9</accession>
<accession>P55227</accession>
<comment type="function">
    <text evidence="1">Plays a role in the extracellular assembly of CsgA (also known as AgfA, AC P0A1E7) into thin aggregative fimbriae (Tafi) fibers. Assembly may also require CsgE (AgfE). Tafi are thought to be assembled via an extracellular nucleation-precipitation (ENP) pathway, and possibly also via an intracellular non-CsgC-dependent pathway.</text>
</comment>
<comment type="subcellular location">
    <subcellularLocation>
        <location evidence="1">Periplasm</location>
    </subcellularLocation>
    <text>Upon overexpression; a small amount is also seen in the cytoplasm.</text>
</comment>
<comment type="induction">
    <text evidence="1">Expressed at low levels in agar-grown cells, part of the csgBAC (agfBAC) operon.</text>
</comment>
<comment type="disruption phenotype">
    <text evidence="1">Cells lacking this gene make aberrant thin aggregative fimbriae (Tafi) which are composed solely of CsgA. Normal Tafi are composed of CsgA and CsgB at a 20:1 ration.</text>
</comment>
<comment type="similarity">
    <text evidence="2">Belongs to the CsgC/AgfC family.</text>
</comment>
<organism>
    <name type="scientific">Salmonella enteritidis</name>
    <dbReference type="NCBI Taxonomy" id="149539"/>
    <lineage>
        <taxon>Bacteria</taxon>
        <taxon>Pseudomonadati</taxon>
        <taxon>Pseudomonadota</taxon>
        <taxon>Gammaproteobacteria</taxon>
        <taxon>Enterobacterales</taxon>
        <taxon>Enterobacteriaceae</taxon>
        <taxon>Salmonella</taxon>
    </lineage>
</organism>
<gene>
    <name type="primary">csgC</name>
    <name type="synonym">agfC</name>
    <name type="synonym">orfC</name>
</gene>
<dbReference type="EMBL" id="U43280">
    <property type="protein sequence ID" value="AAC43600.1"/>
    <property type="molecule type" value="Genomic_DNA"/>
</dbReference>
<dbReference type="PIR" id="JC6041">
    <property type="entry name" value="JC6041"/>
</dbReference>
<dbReference type="RefSeq" id="WP_000557256.1">
    <property type="nucleotide sequence ID" value="NZ_WIDC01000007.1"/>
</dbReference>
<dbReference type="SMR" id="P0A1Z9"/>
<dbReference type="PATRIC" id="fig|149539.321.peg.2068"/>
<dbReference type="OMA" id="SNQLWFD"/>
<dbReference type="GO" id="GO:0042597">
    <property type="term" value="C:periplasmic space"/>
    <property type="evidence" value="ECO:0000314"/>
    <property type="project" value="UniProtKB"/>
</dbReference>
<dbReference type="GO" id="GO:0009297">
    <property type="term" value="P:pilus assembly"/>
    <property type="evidence" value="ECO:0000315"/>
    <property type="project" value="UniProtKB"/>
</dbReference>
<dbReference type="Gene3D" id="2.60.40.2420">
    <property type="match status" value="1"/>
</dbReference>
<dbReference type="InterPro" id="IPR053722">
    <property type="entry name" value="Curli_assembly_CsgC/AgfC"/>
</dbReference>
<dbReference type="InterPro" id="IPR014491">
    <property type="entry name" value="Curli_production_prot_CsgC"/>
</dbReference>
<dbReference type="NCBIfam" id="NF007507">
    <property type="entry name" value="PRK10102.1"/>
    <property type="match status" value="1"/>
</dbReference>
<dbReference type="Pfam" id="PF10610">
    <property type="entry name" value="Tafi-CsgC"/>
    <property type="match status" value="1"/>
</dbReference>
<dbReference type="PIRSF" id="PIRSF018100">
    <property type="entry name" value="CsgC"/>
    <property type="match status" value="1"/>
</dbReference>
<sequence>MHTLLLLAALSNQITFTTTQQGDIYTVIPQVTLNEPCVCQVQILSVRDGVGGQSHTQQKQTLSLPANQPIELSRLSVNISSEDSVKIIVTVSDGQSLHLSQQWPPSAQ</sequence>
<evidence type="ECO:0000269" key="1">
    <source>
    </source>
</evidence>
<evidence type="ECO:0000305" key="2"/>
<evidence type="ECO:0000305" key="3">
    <source>
    </source>
</evidence>
<reference key="1">
    <citation type="journal article" date="1996" name="J. Bacteriol.">
        <title>Salmonella enteritidis agfBAC operon encoding thin, aggregative fimbriae.</title>
        <authorList>
            <person name="Collinson S.K."/>
            <person name="Clouthier S.C."/>
            <person name="Doran J.L."/>
            <person name="Banser P.A."/>
            <person name="Kay W.W."/>
        </authorList>
    </citation>
    <scope>NUCLEOTIDE SEQUENCE [GENOMIC DNA]</scope>
    <source>
        <strain>27655-3B</strain>
    </source>
</reference>
<reference key="2">
    <citation type="journal article" date="2007" name="Microbiology">
        <title>AgfC and AgfE facilitate extracellular thin aggregative fimbriae synthesis in Salmonella enteritidis.</title>
        <authorList>
            <person name="Gibson D.L."/>
            <person name="White A.P."/>
            <person name="Rajotte C.M."/>
            <person name="Kay W.W."/>
        </authorList>
    </citation>
    <scope>PROTEIN SEQUENCE OF N-TERMINUS</scope>
    <scope>FUNCTION IN THIN AGGREGATIVE FIMBRIAE ASSEMBLY</scope>
    <scope>SUBCELLULAR LOCATION</scope>
    <scope>DISRUPTION PHENOTYPE</scope>
    <scope>INDUCTION</scope>
    <scope>OPERON STRUCTURE</scope>
    <source>
        <strain>27655-3B</strain>
    </source>
</reference>